<organism>
    <name type="scientific">Arabidopsis thaliana</name>
    <name type="common">Mouse-ear cress</name>
    <dbReference type="NCBI Taxonomy" id="3702"/>
    <lineage>
        <taxon>Eukaryota</taxon>
        <taxon>Viridiplantae</taxon>
        <taxon>Streptophyta</taxon>
        <taxon>Embryophyta</taxon>
        <taxon>Tracheophyta</taxon>
        <taxon>Spermatophyta</taxon>
        <taxon>Magnoliopsida</taxon>
        <taxon>eudicotyledons</taxon>
        <taxon>Gunneridae</taxon>
        <taxon>Pentapetalae</taxon>
        <taxon>rosids</taxon>
        <taxon>malvids</taxon>
        <taxon>Brassicales</taxon>
        <taxon>Brassicaceae</taxon>
        <taxon>Camelineae</taxon>
        <taxon>Arabidopsis</taxon>
    </lineage>
</organism>
<reference key="1">
    <citation type="journal article" date="1999" name="Nature">
        <title>Sequence and analysis of chromosome 2 of the plant Arabidopsis thaliana.</title>
        <authorList>
            <person name="Lin X."/>
            <person name="Kaul S."/>
            <person name="Rounsley S.D."/>
            <person name="Shea T.P."/>
            <person name="Benito M.-I."/>
            <person name="Town C.D."/>
            <person name="Fujii C.Y."/>
            <person name="Mason T.M."/>
            <person name="Bowman C.L."/>
            <person name="Barnstead M.E."/>
            <person name="Feldblyum T.V."/>
            <person name="Buell C.R."/>
            <person name="Ketchum K.A."/>
            <person name="Lee J.J."/>
            <person name="Ronning C.M."/>
            <person name="Koo H.L."/>
            <person name="Moffat K.S."/>
            <person name="Cronin L.A."/>
            <person name="Shen M."/>
            <person name="Pai G."/>
            <person name="Van Aken S."/>
            <person name="Umayam L."/>
            <person name="Tallon L.J."/>
            <person name="Gill J.E."/>
            <person name="Adams M.D."/>
            <person name="Carrera A.J."/>
            <person name="Creasy T.H."/>
            <person name="Goodman H.M."/>
            <person name="Somerville C.R."/>
            <person name="Copenhaver G.P."/>
            <person name="Preuss D."/>
            <person name="Nierman W.C."/>
            <person name="White O."/>
            <person name="Eisen J.A."/>
            <person name="Salzberg S.L."/>
            <person name="Fraser C.M."/>
            <person name="Venter J.C."/>
        </authorList>
    </citation>
    <scope>NUCLEOTIDE SEQUENCE [LARGE SCALE GENOMIC DNA]</scope>
    <source>
        <strain>cv. Columbia</strain>
    </source>
</reference>
<reference key="2">
    <citation type="journal article" date="2017" name="Plant J.">
        <title>Araport11: a complete reannotation of the Arabidopsis thaliana reference genome.</title>
        <authorList>
            <person name="Cheng C.Y."/>
            <person name="Krishnakumar V."/>
            <person name="Chan A.P."/>
            <person name="Thibaud-Nissen F."/>
            <person name="Schobel S."/>
            <person name="Town C.D."/>
        </authorList>
    </citation>
    <scope>GENOME REANNOTATION</scope>
    <source>
        <strain>cv. Columbia</strain>
    </source>
</reference>
<protein>
    <recommendedName>
        <fullName>Metal tolerance protein 12</fullName>
        <shortName>AtMTP12</shortName>
    </recommendedName>
</protein>
<gene>
    <name type="primary">MTP12</name>
    <name type="ordered locus">At2g04620</name>
    <name type="ORF">F7D11.2</name>
</gene>
<name>MTP12_ARATH</name>
<keyword id="KW-0406">Ion transport</keyword>
<keyword id="KW-0472">Membrane</keyword>
<keyword id="KW-1185">Reference proteome</keyword>
<keyword id="KW-0812">Transmembrane</keyword>
<keyword id="KW-1133">Transmembrane helix</keyword>
<keyword id="KW-0813">Transport</keyword>
<keyword id="KW-0926">Vacuole</keyword>
<accession>Q9SI03</accession>
<accession>F4IFA1</accession>
<evidence type="ECO:0000250" key="1"/>
<evidence type="ECO:0000255" key="2"/>
<evidence type="ECO:0000305" key="3"/>
<comment type="function">
    <text evidence="1">Involved in sequestration of excess metal in the cytoplasm into vacuoles to maintain metal homeostasis.</text>
</comment>
<comment type="subcellular location">
    <subcellularLocation>
        <location evidence="1">Vacuole membrane</location>
        <topology evidence="1">Multi-pass membrane protein</topology>
    </subcellularLocation>
    <text>Tonoplast.</text>
</comment>
<comment type="similarity">
    <text evidence="3">Belongs to the cation diffusion facilitator (CDF) transporter (TC 2.A.4) family. SLC30A subfamily.</text>
</comment>
<comment type="sequence caution" evidence="3">
    <conflict type="erroneous gene model prediction">
        <sequence resource="EMBL-CDS" id="AEC05849"/>
    </conflict>
</comment>
<dbReference type="EMBL" id="AC007231">
    <property type="protein sequence ID" value="AAD32753.1"/>
    <property type="molecule type" value="Genomic_DNA"/>
</dbReference>
<dbReference type="EMBL" id="CP002685">
    <property type="protein sequence ID" value="AEC05849.1"/>
    <property type="status" value="ALT_SEQ"/>
    <property type="molecule type" value="Genomic_DNA"/>
</dbReference>
<dbReference type="PIR" id="D84459">
    <property type="entry name" value="D84459"/>
</dbReference>
<dbReference type="RefSeq" id="NP_178539.2">
    <property type="nucleotide sequence ID" value="NM_126491.3"/>
</dbReference>
<dbReference type="SMR" id="Q9SI03"/>
<dbReference type="BioGRID" id="405">
    <property type="interactions" value="1"/>
</dbReference>
<dbReference type="FunCoup" id="Q9SI03">
    <property type="interactions" value="2809"/>
</dbReference>
<dbReference type="IntAct" id="Q9SI03">
    <property type="interactions" value="2"/>
</dbReference>
<dbReference type="STRING" id="3702.Q9SI03"/>
<dbReference type="TCDB" id="2.A.4.4.9">
    <property type="family name" value="the cation diffusion facilitator (cdf) family"/>
</dbReference>
<dbReference type="PeptideAtlas" id="Q9SI03"/>
<dbReference type="GeneID" id="815004"/>
<dbReference type="KEGG" id="ath:AT2G04620"/>
<dbReference type="Araport" id="AT2G04620"/>
<dbReference type="TAIR" id="AT2G04620">
    <property type="gene designation" value="MTP12"/>
</dbReference>
<dbReference type="eggNOG" id="KOG1484">
    <property type="taxonomic scope" value="Eukaryota"/>
</dbReference>
<dbReference type="InParanoid" id="Q9SI03"/>
<dbReference type="PRO" id="PR:Q9SI03"/>
<dbReference type="Proteomes" id="UP000006548">
    <property type="component" value="Chromosome 2"/>
</dbReference>
<dbReference type="ExpressionAtlas" id="Q9SI03">
    <property type="expression patterns" value="baseline and differential"/>
</dbReference>
<dbReference type="GO" id="GO:0005794">
    <property type="term" value="C:Golgi apparatus"/>
    <property type="evidence" value="ECO:0000314"/>
    <property type="project" value="TAIR"/>
</dbReference>
<dbReference type="GO" id="GO:0016020">
    <property type="term" value="C:membrane"/>
    <property type="evidence" value="ECO:0007005"/>
    <property type="project" value="TAIR"/>
</dbReference>
<dbReference type="GO" id="GO:0005774">
    <property type="term" value="C:vacuolar membrane"/>
    <property type="evidence" value="ECO:0007669"/>
    <property type="project" value="UniProtKB-SubCell"/>
</dbReference>
<dbReference type="GO" id="GO:0046873">
    <property type="term" value="F:metal ion transmembrane transporter activity"/>
    <property type="evidence" value="ECO:0000318"/>
    <property type="project" value="GO_Central"/>
</dbReference>
<dbReference type="GO" id="GO:0005385">
    <property type="term" value="F:zinc ion transmembrane transporter activity"/>
    <property type="evidence" value="ECO:0007669"/>
    <property type="project" value="InterPro"/>
</dbReference>
<dbReference type="GO" id="GO:0006882">
    <property type="term" value="P:intracellular zinc ion homeostasis"/>
    <property type="evidence" value="ECO:0007669"/>
    <property type="project" value="InterPro"/>
</dbReference>
<dbReference type="GO" id="GO:0030001">
    <property type="term" value="P:metal ion transport"/>
    <property type="evidence" value="ECO:0000318"/>
    <property type="project" value="GO_Central"/>
</dbReference>
<dbReference type="GO" id="GO:0071578">
    <property type="term" value="P:zinc ion import across plasma membrane"/>
    <property type="evidence" value="ECO:0000316"/>
    <property type="project" value="TAIR"/>
</dbReference>
<dbReference type="FunFam" id="1.20.1510.10:FF:000022">
    <property type="entry name" value="Cation transporter, putative"/>
    <property type="match status" value="1"/>
</dbReference>
<dbReference type="Gene3D" id="1.20.1510.10">
    <property type="entry name" value="Cation efflux protein transmembrane domain"/>
    <property type="match status" value="1"/>
</dbReference>
<dbReference type="InterPro" id="IPR002524">
    <property type="entry name" value="Cation_efflux"/>
</dbReference>
<dbReference type="InterPro" id="IPR027469">
    <property type="entry name" value="Cation_efflux_TMD_sf"/>
</dbReference>
<dbReference type="InterPro" id="IPR045316">
    <property type="entry name" value="Msc2-like"/>
</dbReference>
<dbReference type="NCBIfam" id="TIGR01297">
    <property type="entry name" value="CDF"/>
    <property type="match status" value="1"/>
</dbReference>
<dbReference type="PANTHER" id="PTHR45755">
    <property type="match status" value="1"/>
</dbReference>
<dbReference type="PANTHER" id="PTHR45755:SF4">
    <property type="entry name" value="ZINC TRANSPORTER 7"/>
    <property type="match status" value="1"/>
</dbReference>
<dbReference type="Pfam" id="PF01545">
    <property type="entry name" value="Cation_efflux"/>
    <property type="match status" value="1"/>
</dbReference>
<dbReference type="SUPFAM" id="SSF161111">
    <property type="entry name" value="Cation efflux protein transmembrane domain-like"/>
    <property type="match status" value="1"/>
</dbReference>
<sequence length="300" mass="33071">MESPESFSTMFMKPIRHILSEKKSRKIALFLLINTAYMVVEFVAGFMSNSLGLISDACHMLFDCAALAIGLYASYISRLPANHQYNYGRGRFEVLSGYVNAVFLVLVGALIVLESIERILDPQEISTNSLLVVSVGGLLVNIVGLIFFHEEHHHAHGGSGIFLHVLADTMGSVGVVISTLLIKYKGWLVADPASSIFISILIIASVIPLLRNSAEILLQRVPRAHRQDLKEAMRNILKTKGVCSIQRLHVWSFTNSDVVATLHLLVSADSDKTDTKLQVSRLLEDAGVKDWTLQVESVNS</sequence>
<feature type="chain" id="PRO_0000400008" description="Metal tolerance protein 12">
    <location>
        <begin position="1"/>
        <end position="300"/>
    </location>
</feature>
<feature type="topological domain" description="Cytoplasmic" evidence="2">
    <location>
        <begin position="1"/>
        <end position="26"/>
    </location>
</feature>
<feature type="transmembrane region" description="Helical" evidence="2">
    <location>
        <begin position="27"/>
        <end position="47"/>
    </location>
</feature>
<feature type="topological domain" description="Vacuolar" evidence="2">
    <location>
        <begin position="48"/>
        <end position="50"/>
    </location>
</feature>
<feature type="transmembrane region" description="Helical" evidence="2">
    <location>
        <begin position="51"/>
        <end position="71"/>
    </location>
</feature>
<feature type="topological domain" description="Cytoplasmic" evidence="2">
    <location>
        <begin position="72"/>
        <end position="91"/>
    </location>
</feature>
<feature type="transmembrane region" description="Helical" evidence="2">
    <location>
        <begin position="92"/>
        <end position="112"/>
    </location>
</feature>
<feature type="topological domain" description="Vacuolar" evidence="2">
    <location>
        <begin position="113"/>
        <end position="128"/>
    </location>
</feature>
<feature type="transmembrane region" description="Helical" evidence="2">
    <location>
        <begin position="129"/>
        <end position="149"/>
    </location>
</feature>
<feature type="topological domain" description="Cytoplasmic" evidence="2">
    <location>
        <begin position="150"/>
        <end position="160"/>
    </location>
</feature>
<feature type="transmembrane region" description="Helical" evidence="2">
    <location>
        <begin position="161"/>
        <end position="181"/>
    </location>
</feature>
<feature type="topological domain" description="Vacuolar" evidence="2">
    <location>
        <begin position="182"/>
        <end position="186"/>
    </location>
</feature>
<feature type="transmembrane region" description="Helical" evidence="2">
    <location>
        <begin position="187"/>
        <end position="207"/>
    </location>
</feature>
<feature type="topological domain" description="Cytoplasmic" evidence="2">
    <location>
        <begin position="208"/>
        <end position="300"/>
    </location>
</feature>
<proteinExistence type="inferred from homology"/>